<keyword id="KW-0551">Lipid droplet</keyword>
<keyword id="KW-0443">Lipid metabolism</keyword>
<keyword id="KW-0449">Lipoprotein</keyword>
<keyword id="KW-0488">Methylation</keyword>
<keyword id="KW-0520">NAD</keyword>
<keyword id="KW-0560">Oxidoreductase</keyword>
<keyword id="KW-0636">Prenylation</keyword>
<keyword id="KW-1185">Reference proteome</keyword>
<proteinExistence type="evidence at protein level"/>
<accession>E9Q3E1</accession>
<accession>Q497U8</accession>
<reference evidence="10" key="1">
    <citation type="journal article" date="2009" name="PLoS Biol.">
        <title>Lineage-specific biology revealed by a finished genome assembly of the mouse.</title>
        <authorList>
            <person name="Church D.M."/>
            <person name="Goodstadt L."/>
            <person name="Hillier L.W."/>
            <person name="Zody M.C."/>
            <person name="Goldstein S."/>
            <person name="She X."/>
            <person name="Bult C.J."/>
            <person name="Agarwala R."/>
            <person name="Cherry J.L."/>
            <person name="DiCuccio M."/>
            <person name="Hlavina W."/>
            <person name="Kapustin Y."/>
            <person name="Meric P."/>
            <person name="Maglott D."/>
            <person name="Birtle Z."/>
            <person name="Marques A.C."/>
            <person name="Graves T."/>
            <person name="Zhou S."/>
            <person name="Teague B."/>
            <person name="Potamousis K."/>
            <person name="Churas C."/>
            <person name="Place M."/>
            <person name="Herschleb J."/>
            <person name="Runnheim R."/>
            <person name="Forrest D."/>
            <person name="Amos-Landgraf J."/>
            <person name="Schwartz D.C."/>
            <person name="Cheng Z."/>
            <person name="Lindblad-Toh K."/>
            <person name="Eichler E.E."/>
            <person name="Ponting C.P."/>
        </authorList>
    </citation>
    <scope>NUCLEOTIDE SEQUENCE [LARGE SCALE GENOMIC DNA]</scope>
    <source>
        <strain evidence="10">C57BL/6J</strain>
    </source>
</reference>
<reference evidence="8" key="2">
    <citation type="journal article" date="2004" name="Genome Res.">
        <title>The status, quality, and expansion of the NIH full-length cDNA project: the Mammalian Gene Collection (MGC).</title>
        <authorList>
            <consortium name="The MGC Project Team"/>
        </authorList>
    </citation>
    <scope>NUCLEOTIDE SEQUENCE [LARGE SCALE MRNA] OF 299-479</scope>
    <source>
        <tissue evidence="8">Placenta</tissue>
    </source>
</reference>
<reference key="3">
    <citation type="journal article" date="2010" name="Cell">
        <title>A tissue-specific atlas of mouse protein phosphorylation and expression.</title>
        <authorList>
            <person name="Huttlin E.L."/>
            <person name="Jedrychowski M.P."/>
            <person name="Elias J.E."/>
            <person name="Goswami T."/>
            <person name="Rad R."/>
            <person name="Beausoleil S.A."/>
            <person name="Villen J."/>
            <person name="Haas W."/>
            <person name="Sowa M.E."/>
            <person name="Gygi S.P."/>
        </authorList>
    </citation>
    <scope>IDENTIFICATION BY MASS SPECTROMETRY [LARGE SCALE ANALYSIS]</scope>
    <source>
        <tissue>Brown adipose tissue</tissue>
    </source>
</reference>
<reference evidence="6" key="4">
    <citation type="journal article" date="2015" name="Biochem. J.">
        <title>Mouse aldehyde dehydrogenase ALDH3B2 is localized to lipid droplets via two C-terminal tryptophan residues and lipid modification.</title>
        <authorList>
            <person name="Kitamura T."/>
            <person name="Takagi S."/>
            <person name="Naganuma T."/>
            <person name="Kihara A."/>
        </authorList>
    </citation>
    <scope>FUNCTION</scope>
    <scope>CATALYTIC ACTIVITY</scope>
    <scope>SUBCELLULAR LOCATION</scope>
    <scope>TISSUE SPECIFICITY</scope>
    <scope>ISOPRENYLATION AT CYS-476</scope>
    <scope>MUTAGENESIS OF TRP-462; TRP-469 AND CYS-476</scope>
</reference>
<gene>
    <name evidence="9" type="primary">Aldh3b2</name>
</gene>
<protein>
    <recommendedName>
        <fullName evidence="9">Aldehyde dehydrogenase family 3 member B2</fullName>
        <shortName>Aldh3B2</shortName>
        <ecNumber evidence="5">1.2.1.3</ecNumber>
    </recommendedName>
    <alternativeName>
        <fullName evidence="1">Aldehyde dehydrogenase 8</fullName>
    </alternativeName>
    <alternativeName>
        <fullName>Long-chain fatty aldehyde dehydrogenase</fullName>
        <ecNumber evidence="5">1.2.1.48</ecNumber>
    </alternativeName>
</protein>
<sequence>MSAAETGSEPSQGAGPSEATLHSLREAFNAGRTRPTEFRTAQLRSLGRFLQENKELLQDALAKDVGKSGFESDMSEIILCENEVDLALKNLQTWMKDEPVSTNLLTKLSSAFIRKEPFGLVLIIAPWNYPVNLMIIPLVGAIAAGNCVVLKPSEISKNTEKVLAELLPQYLDQSCFAVMLGGPEETRQLLEHKFDYIFFTGSPRVGKIVMTAAAKHLTPITLELGGKNPCYVDDNCDPQTVANRVAWFRYFNAGQTCVAPDYILCSQEMQERLVPALQNSITRFYGDNPQTSPNLGRIINQKHFKRLQGLLGCGRVAIGGQSDEGERYIAPTVLVDVQETEPVMQEEIFGPILPLVTVRSLDEAIEFINRREKPLALYAFSNNNQVVNQMLERTSSGGFGGNDGFLYLTLPALPLGGVGNSGMGRYHGKFSFDTFSHHRACLLRSPGMEKLNDLRYPPYGPWNQQLISWAIGSRSCTLL</sequence>
<comment type="function">
    <text evidence="5">Oxidizes medium and long chain fatty aldehydes in lipid droplets into non-toxic fatty acids.</text>
</comment>
<comment type="catalytic activity">
    <reaction evidence="5">
        <text>an aldehyde + NAD(+) + H2O = a carboxylate + NADH + 2 H(+)</text>
        <dbReference type="Rhea" id="RHEA:16185"/>
        <dbReference type="ChEBI" id="CHEBI:15377"/>
        <dbReference type="ChEBI" id="CHEBI:15378"/>
        <dbReference type="ChEBI" id="CHEBI:17478"/>
        <dbReference type="ChEBI" id="CHEBI:29067"/>
        <dbReference type="ChEBI" id="CHEBI:57540"/>
        <dbReference type="ChEBI" id="CHEBI:57945"/>
        <dbReference type="EC" id="1.2.1.3"/>
    </reaction>
    <physiologicalReaction direction="left-to-right" evidence="7">
        <dbReference type="Rhea" id="RHEA:16186"/>
    </physiologicalReaction>
</comment>
<comment type="catalytic activity">
    <reaction evidence="5">
        <text>a long-chain fatty aldehyde + NAD(+) + H2O = a long-chain fatty acid + NADH + 2 H(+)</text>
        <dbReference type="Rhea" id="RHEA:10652"/>
        <dbReference type="ChEBI" id="CHEBI:15377"/>
        <dbReference type="ChEBI" id="CHEBI:15378"/>
        <dbReference type="ChEBI" id="CHEBI:17176"/>
        <dbReference type="ChEBI" id="CHEBI:57540"/>
        <dbReference type="ChEBI" id="CHEBI:57560"/>
        <dbReference type="ChEBI" id="CHEBI:57945"/>
        <dbReference type="EC" id="1.2.1.48"/>
    </reaction>
    <physiologicalReaction direction="left-to-right" evidence="7">
        <dbReference type="Rhea" id="RHEA:10653"/>
    </physiologicalReaction>
</comment>
<comment type="catalytic activity">
    <reaction evidence="5">
        <text>a medium-chain fatty aldehyde + NAD(+) + H2O = a medium-chain fatty acid + NADH + 2 H(+)</text>
        <dbReference type="Rhea" id="RHEA:69763"/>
        <dbReference type="ChEBI" id="CHEBI:15377"/>
        <dbReference type="ChEBI" id="CHEBI:15378"/>
        <dbReference type="ChEBI" id="CHEBI:57540"/>
        <dbReference type="ChEBI" id="CHEBI:57945"/>
        <dbReference type="ChEBI" id="CHEBI:59558"/>
        <dbReference type="ChEBI" id="CHEBI:142621"/>
    </reaction>
    <physiologicalReaction direction="left-to-right" evidence="7">
        <dbReference type="Rhea" id="RHEA:69764"/>
    </physiologicalReaction>
</comment>
<comment type="catalytic activity">
    <reaction evidence="5">
        <text>hexadecanoate + NADH + 2 H(+) = hexadecanal + NAD(+) + H2O</text>
        <dbReference type="Rhea" id="RHEA:33739"/>
        <dbReference type="ChEBI" id="CHEBI:7896"/>
        <dbReference type="ChEBI" id="CHEBI:15377"/>
        <dbReference type="ChEBI" id="CHEBI:15378"/>
        <dbReference type="ChEBI" id="CHEBI:17600"/>
        <dbReference type="ChEBI" id="CHEBI:57540"/>
        <dbReference type="ChEBI" id="CHEBI:57945"/>
    </reaction>
    <physiologicalReaction direction="left-to-right" evidence="7">
        <dbReference type="Rhea" id="RHEA:33740"/>
    </physiologicalReaction>
</comment>
<comment type="catalytic activity">
    <reaction evidence="5">
        <text>octanal + NAD(+) + H2O = octanoate + NADH + 2 H(+)</text>
        <dbReference type="Rhea" id="RHEA:44100"/>
        <dbReference type="ChEBI" id="CHEBI:15377"/>
        <dbReference type="ChEBI" id="CHEBI:15378"/>
        <dbReference type="ChEBI" id="CHEBI:17935"/>
        <dbReference type="ChEBI" id="CHEBI:25646"/>
        <dbReference type="ChEBI" id="CHEBI:57540"/>
        <dbReference type="ChEBI" id="CHEBI:57945"/>
    </reaction>
    <physiologicalReaction direction="left-to-right" evidence="7">
        <dbReference type="Rhea" id="RHEA:44101"/>
    </physiologicalReaction>
</comment>
<comment type="pathway">
    <text evidence="1">Alcohol metabolism; ethanol degradation; acetate from ethanol: step 2/2.</text>
</comment>
<comment type="subcellular location">
    <subcellularLocation>
        <location evidence="5">Lipid droplet</location>
    </subcellularLocation>
</comment>
<comment type="tissue specificity">
    <text evidence="5">Expressed in testis, white adipose tissue, lung, small intestine, kidney, spleen and liver.</text>
</comment>
<comment type="PTM">
    <text evidence="5">Geranylgeranylation is important for localization to lipid droplets and enzyme activity.</text>
</comment>
<comment type="similarity">
    <text evidence="2">Belongs to the aldehyde dehydrogenase family.</text>
</comment>
<organism>
    <name type="scientific">Mus musculus</name>
    <name type="common">Mouse</name>
    <dbReference type="NCBI Taxonomy" id="10090"/>
    <lineage>
        <taxon>Eukaryota</taxon>
        <taxon>Metazoa</taxon>
        <taxon>Chordata</taxon>
        <taxon>Craniata</taxon>
        <taxon>Vertebrata</taxon>
        <taxon>Euteleostomi</taxon>
        <taxon>Mammalia</taxon>
        <taxon>Eutheria</taxon>
        <taxon>Euarchontoglires</taxon>
        <taxon>Glires</taxon>
        <taxon>Rodentia</taxon>
        <taxon>Myomorpha</taxon>
        <taxon>Muroidea</taxon>
        <taxon>Muridae</taxon>
        <taxon>Murinae</taxon>
        <taxon>Mus</taxon>
        <taxon>Mus</taxon>
    </lineage>
</organism>
<feature type="chain" id="PRO_0000436528" description="Aldehyde dehydrogenase family 3 member B2">
    <location>
        <begin position="1"/>
        <end position="476"/>
    </location>
</feature>
<feature type="propeptide" id="PRO_0000436529" description="Removed in mature form" evidence="7">
    <location>
        <begin position="477"/>
        <end position="479"/>
    </location>
</feature>
<feature type="active site" evidence="3">
    <location>
        <position position="223"/>
    </location>
</feature>
<feature type="active site" evidence="4">
    <location>
        <position position="257"/>
    </location>
</feature>
<feature type="modified residue" description="Cysteine methyl ester" evidence="6">
    <location>
        <position position="476"/>
    </location>
</feature>
<feature type="lipid moiety-binding region" description="S-geranylgeranyl cysteine" evidence="7">
    <location>
        <position position="476"/>
    </location>
</feature>
<feature type="mutagenesis site" description="Reduces lipid droplet localization." evidence="5">
    <original>W</original>
    <variation>A</variation>
    <location>
        <position position="462"/>
    </location>
</feature>
<feature type="mutagenesis site" description="Reduces lipid droplet localization." evidence="5">
    <original>W</original>
    <variation>A</variation>
    <location>
        <position position="469"/>
    </location>
</feature>
<feature type="mutagenesis site" description="Reduces lipid droplet localization." evidence="5">
    <original>C</original>
    <variation>S</variation>
    <location>
        <position position="476"/>
    </location>
</feature>
<name>AL3B2_MOUSE</name>
<dbReference type="EC" id="1.2.1.3" evidence="5"/>
<dbReference type="EC" id="1.2.1.48" evidence="5"/>
<dbReference type="EMBL" id="AC133523">
    <property type="status" value="NOT_ANNOTATED_CDS"/>
    <property type="molecule type" value="Genomic_DNA"/>
</dbReference>
<dbReference type="EMBL" id="BC100370">
    <property type="protein sequence ID" value="AAI00371.1"/>
    <property type="molecule type" value="mRNA"/>
</dbReference>
<dbReference type="CCDS" id="CCDS50347.1"/>
<dbReference type="RefSeq" id="NP_001170909.1">
    <property type="nucleotide sequence ID" value="NM_001177438.1"/>
</dbReference>
<dbReference type="SMR" id="E9Q3E1"/>
<dbReference type="FunCoup" id="E9Q3E1">
    <property type="interactions" value="407"/>
</dbReference>
<dbReference type="STRING" id="10090.ENSMUSP00000115356"/>
<dbReference type="SwissLipids" id="SLP:000001743"/>
<dbReference type="iPTMnet" id="E9Q3E1"/>
<dbReference type="PhosphoSitePlus" id="E9Q3E1"/>
<dbReference type="SwissPalm" id="E9Q3E1"/>
<dbReference type="jPOST" id="E9Q3E1"/>
<dbReference type="PaxDb" id="10090-ENSMUSP00000115356"/>
<dbReference type="PeptideAtlas" id="E9Q3E1"/>
<dbReference type="ProteomicsDB" id="296166"/>
<dbReference type="Pumba" id="E9Q3E1"/>
<dbReference type="Ensembl" id="ENSMUST00000143380.3">
    <property type="protein sequence ID" value="ENSMUSP00000115356.2"/>
    <property type="gene ID" value="ENSMUSG00000075296.6"/>
</dbReference>
<dbReference type="GeneID" id="621603"/>
<dbReference type="KEGG" id="mmu:621603"/>
<dbReference type="UCSC" id="uc008fxw.2">
    <property type="organism name" value="mouse"/>
</dbReference>
<dbReference type="AGR" id="MGI:2147613"/>
<dbReference type="CTD" id="222"/>
<dbReference type="MGI" id="MGI:2147613">
    <property type="gene designation" value="Aldh3b2"/>
</dbReference>
<dbReference type="VEuPathDB" id="HostDB:ENSMUSG00000075296"/>
<dbReference type="eggNOG" id="KOG2456">
    <property type="taxonomic scope" value="Eukaryota"/>
</dbReference>
<dbReference type="GeneTree" id="ENSGT00940000155904"/>
<dbReference type="HOGENOM" id="CLU_005391_3_1_1"/>
<dbReference type="InParanoid" id="E9Q3E1"/>
<dbReference type="OMA" id="PLVAYWF"/>
<dbReference type="OrthoDB" id="440325at2759"/>
<dbReference type="PhylomeDB" id="E9Q3E1"/>
<dbReference type="TreeFam" id="TF314264"/>
<dbReference type="BRENDA" id="1.2.1.48">
    <property type="organism ID" value="3474"/>
</dbReference>
<dbReference type="Reactome" id="R-MMU-9845614">
    <property type="pathway name" value="Sphingolipid catabolism"/>
</dbReference>
<dbReference type="UniPathway" id="UPA00780">
    <property type="reaction ID" value="UER00768"/>
</dbReference>
<dbReference type="BioGRID-ORCS" id="621603">
    <property type="hits" value="3 hits in 80 CRISPR screens"/>
</dbReference>
<dbReference type="PRO" id="PR:E9Q3E1"/>
<dbReference type="Proteomes" id="UP000000589">
    <property type="component" value="Chromosome 19"/>
</dbReference>
<dbReference type="RNAct" id="E9Q3E1">
    <property type="molecule type" value="protein"/>
</dbReference>
<dbReference type="Bgee" id="ENSMUSG00000075296">
    <property type="expression patterns" value="Expressed in lip and 84 other cell types or tissues"/>
</dbReference>
<dbReference type="GO" id="GO:0005811">
    <property type="term" value="C:lipid droplet"/>
    <property type="evidence" value="ECO:0000314"/>
    <property type="project" value="MGI"/>
</dbReference>
<dbReference type="GO" id="GO:0004029">
    <property type="term" value="F:aldehyde dehydrogenase (NAD+) activity"/>
    <property type="evidence" value="ECO:0000314"/>
    <property type="project" value="MGI"/>
</dbReference>
<dbReference type="GO" id="GO:0050061">
    <property type="term" value="F:long-chain fatty aldehyde dehydrogenase (NAD+) activity"/>
    <property type="evidence" value="ECO:0007669"/>
    <property type="project" value="RHEA"/>
</dbReference>
<dbReference type="GO" id="GO:0052814">
    <property type="term" value="F:medium-chain fatty aldehyde dehydrogenase (NAD+) activity"/>
    <property type="evidence" value="ECO:0007669"/>
    <property type="project" value="RHEA"/>
</dbReference>
<dbReference type="GO" id="GO:0006081">
    <property type="term" value="P:aldehyde metabolic process"/>
    <property type="evidence" value="ECO:0000305"/>
    <property type="project" value="MGI"/>
</dbReference>
<dbReference type="GO" id="GO:0006068">
    <property type="term" value="P:ethanol catabolic process"/>
    <property type="evidence" value="ECO:0007669"/>
    <property type="project" value="UniProtKB-UniPathway"/>
</dbReference>
<dbReference type="GO" id="GO:0006629">
    <property type="term" value="P:lipid metabolic process"/>
    <property type="evidence" value="ECO:0007669"/>
    <property type="project" value="UniProtKB-KW"/>
</dbReference>
<dbReference type="CDD" id="cd07132">
    <property type="entry name" value="ALDH_F3AB"/>
    <property type="match status" value="1"/>
</dbReference>
<dbReference type="FunFam" id="3.40.309.10:FF:000003">
    <property type="entry name" value="Aldehyde dehydrogenase"/>
    <property type="match status" value="1"/>
</dbReference>
<dbReference type="FunFam" id="3.40.605.10:FF:000004">
    <property type="entry name" value="Aldehyde dehydrogenase"/>
    <property type="match status" value="1"/>
</dbReference>
<dbReference type="Gene3D" id="3.40.605.10">
    <property type="entry name" value="Aldehyde Dehydrogenase, Chain A, domain 1"/>
    <property type="match status" value="1"/>
</dbReference>
<dbReference type="Gene3D" id="3.40.309.10">
    <property type="entry name" value="Aldehyde Dehydrogenase, Chain A, domain 2"/>
    <property type="match status" value="1"/>
</dbReference>
<dbReference type="InterPro" id="IPR016161">
    <property type="entry name" value="Ald_DH/histidinol_DH"/>
</dbReference>
<dbReference type="InterPro" id="IPR016163">
    <property type="entry name" value="Ald_DH_C"/>
</dbReference>
<dbReference type="InterPro" id="IPR016160">
    <property type="entry name" value="Ald_DH_CS_CYS"/>
</dbReference>
<dbReference type="InterPro" id="IPR029510">
    <property type="entry name" value="Ald_DH_CS_GLU"/>
</dbReference>
<dbReference type="InterPro" id="IPR016162">
    <property type="entry name" value="Ald_DH_N"/>
</dbReference>
<dbReference type="InterPro" id="IPR015590">
    <property type="entry name" value="Aldehyde_DH_dom"/>
</dbReference>
<dbReference type="InterPro" id="IPR012394">
    <property type="entry name" value="Aldehyde_DH_NAD(P)"/>
</dbReference>
<dbReference type="PANTHER" id="PTHR43570">
    <property type="entry name" value="ALDEHYDE DEHYDROGENASE"/>
    <property type="match status" value="1"/>
</dbReference>
<dbReference type="PANTHER" id="PTHR43570:SF6">
    <property type="entry name" value="ALDEHYDE DEHYDROGENASE FAMILY 3 MEMBER B2"/>
    <property type="match status" value="1"/>
</dbReference>
<dbReference type="Pfam" id="PF00171">
    <property type="entry name" value="Aldedh"/>
    <property type="match status" value="1"/>
</dbReference>
<dbReference type="PIRSF" id="PIRSF036492">
    <property type="entry name" value="ALDH"/>
    <property type="match status" value="1"/>
</dbReference>
<dbReference type="SUPFAM" id="SSF53720">
    <property type="entry name" value="ALDH-like"/>
    <property type="match status" value="1"/>
</dbReference>
<dbReference type="PROSITE" id="PS00070">
    <property type="entry name" value="ALDEHYDE_DEHYDR_CYS"/>
    <property type="match status" value="1"/>
</dbReference>
<dbReference type="PROSITE" id="PS00687">
    <property type="entry name" value="ALDEHYDE_DEHYDR_GLU"/>
    <property type="match status" value="1"/>
</dbReference>
<evidence type="ECO:0000250" key="1">
    <source>
        <dbReference type="UniProtKB" id="P48448"/>
    </source>
</evidence>
<evidence type="ECO:0000255" key="2">
    <source>
        <dbReference type="PIRNR" id="PIRNR036492"/>
    </source>
</evidence>
<evidence type="ECO:0000255" key="3">
    <source>
        <dbReference type="PROSITE-ProRule" id="PRU10007"/>
    </source>
</evidence>
<evidence type="ECO:0000255" key="4">
    <source>
        <dbReference type="PROSITE-ProRule" id="PRU10008"/>
    </source>
</evidence>
<evidence type="ECO:0000269" key="5">
    <source>
    </source>
</evidence>
<evidence type="ECO:0000305" key="6"/>
<evidence type="ECO:0000305" key="7">
    <source>
    </source>
</evidence>
<evidence type="ECO:0000312" key="8">
    <source>
        <dbReference type="EMBL" id="AAI00371.1"/>
    </source>
</evidence>
<evidence type="ECO:0000312" key="9">
    <source>
        <dbReference type="MGI" id="MGI:2147613"/>
    </source>
</evidence>
<evidence type="ECO:0000312" key="10">
    <source>
        <dbReference type="Proteomes" id="UP000000589"/>
    </source>
</evidence>